<comment type="function">
    <text evidence="1">Involved in the uptake of glucose.</text>
</comment>
<comment type="subcellular location">
    <subcellularLocation>
        <location evidence="3">Cell membrane</location>
        <topology evidence="3">Multi-pass membrane protein</topology>
    </subcellularLocation>
</comment>
<comment type="similarity">
    <text evidence="3">Belongs to the GRP transporter (TC 2.A.7.5) family.</text>
</comment>
<proteinExistence type="inferred from homology"/>
<gene>
    <name type="primary">glcU</name>
    <name type="ordered locus">BC_4716</name>
</gene>
<sequence>MMDIFLAILPAIFWGSIVLFNVKLGGGPYSQTLGTTFGALIFSIVVYIFMKPVLTPTVIGVGVVSGLFWALGQANQLKSIDLMGVSRTMPISTGLQLVATTLFGVIVFHEWSTTISVVLGILALVCIIIGVILTSLQSEEEKNAEQAANFKRGIVILLISTVGYLVYVVVIRLFNVDGWSALLPQAVGMVLGGILLTFKHHPFNKYAIRNIIPGLIWAAGNMFLFISQPRVGVATSFSLSQMGIIISTLGGILILGEKKTKRQLTGIVVGIVFIIAAGIMLGIAKS</sequence>
<dbReference type="EMBL" id="AE016877">
    <property type="protein sequence ID" value="AAP11621.1"/>
    <property type="molecule type" value="Genomic_DNA"/>
</dbReference>
<dbReference type="RefSeq" id="NP_834420.1">
    <property type="nucleotide sequence ID" value="NC_004722.1"/>
</dbReference>
<dbReference type="SMR" id="Q816V0"/>
<dbReference type="STRING" id="226900.BC_4716"/>
<dbReference type="KEGG" id="bce:BC4716"/>
<dbReference type="PATRIC" id="fig|226900.8.peg.4878"/>
<dbReference type="HOGENOM" id="CLU_076024_0_0_9"/>
<dbReference type="Proteomes" id="UP000001417">
    <property type="component" value="Chromosome"/>
</dbReference>
<dbReference type="GO" id="GO:0005886">
    <property type="term" value="C:plasma membrane"/>
    <property type="evidence" value="ECO:0007669"/>
    <property type="project" value="UniProtKB-SubCell"/>
</dbReference>
<dbReference type="GO" id="GO:0015144">
    <property type="term" value="F:carbohydrate transmembrane transporter activity"/>
    <property type="evidence" value="ECO:0007669"/>
    <property type="project" value="InterPro"/>
</dbReference>
<dbReference type="CDD" id="cd23112">
    <property type="entry name" value="glucose_uptake_GlcU"/>
    <property type="match status" value="1"/>
</dbReference>
<dbReference type="InterPro" id="IPR010651">
    <property type="entry name" value="Sugar_transport"/>
</dbReference>
<dbReference type="NCBIfam" id="TIGR00776">
    <property type="entry name" value="RhaT"/>
    <property type="match status" value="1"/>
</dbReference>
<dbReference type="PANTHER" id="PTHR16119">
    <property type="entry name" value="TRANSMEMBRANE PROTEIN 144"/>
    <property type="match status" value="1"/>
</dbReference>
<dbReference type="PANTHER" id="PTHR16119:SF17">
    <property type="entry name" value="TRANSMEMBRANE PROTEIN 144"/>
    <property type="match status" value="1"/>
</dbReference>
<dbReference type="Pfam" id="PF06800">
    <property type="entry name" value="Sugar_transport"/>
    <property type="match status" value="1"/>
</dbReference>
<dbReference type="SUPFAM" id="SSF103481">
    <property type="entry name" value="Multidrug resistance efflux transporter EmrE"/>
    <property type="match status" value="2"/>
</dbReference>
<organism>
    <name type="scientific">Bacillus cereus (strain ATCC 14579 / DSM 31 / CCUG 7414 / JCM 2152 / NBRC 15305 / NCIMB 9373 / NCTC 2599 / NRRL B-3711)</name>
    <dbReference type="NCBI Taxonomy" id="226900"/>
    <lineage>
        <taxon>Bacteria</taxon>
        <taxon>Bacillati</taxon>
        <taxon>Bacillota</taxon>
        <taxon>Bacilli</taxon>
        <taxon>Bacillales</taxon>
        <taxon>Bacillaceae</taxon>
        <taxon>Bacillus</taxon>
        <taxon>Bacillus cereus group</taxon>
    </lineage>
</organism>
<feature type="chain" id="PRO_0000213621" description="Probable glucose uptake protein GlcU">
    <location>
        <begin position="1"/>
        <end position="286"/>
    </location>
</feature>
<feature type="transmembrane region" description="Helical" evidence="2">
    <location>
        <begin position="4"/>
        <end position="22"/>
    </location>
</feature>
<feature type="transmembrane region" description="Helical" evidence="2">
    <location>
        <begin position="27"/>
        <end position="49"/>
    </location>
</feature>
<feature type="transmembrane region" description="Helical" evidence="2">
    <location>
        <begin position="53"/>
        <end position="72"/>
    </location>
</feature>
<feature type="transmembrane region" description="Helical" evidence="2">
    <location>
        <begin position="85"/>
        <end position="107"/>
    </location>
</feature>
<feature type="transmembrane region" description="Helical" evidence="2">
    <location>
        <begin position="111"/>
        <end position="133"/>
    </location>
</feature>
<feature type="transmembrane region" description="Helical" evidence="2">
    <location>
        <begin position="154"/>
        <end position="176"/>
    </location>
</feature>
<feature type="transmembrane region" description="Helical" evidence="2">
    <location>
        <begin position="181"/>
        <end position="198"/>
    </location>
</feature>
<feature type="transmembrane region" description="Helical" evidence="2">
    <location>
        <begin position="211"/>
        <end position="228"/>
    </location>
</feature>
<feature type="transmembrane region" description="Helical" evidence="2">
    <location>
        <begin position="233"/>
        <end position="255"/>
    </location>
</feature>
<feature type="transmembrane region" description="Helical" evidence="2">
    <location>
        <begin position="267"/>
        <end position="284"/>
    </location>
</feature>
<evidence type="ECO:0000250" key="1"/>
<evidence type="ECO:0000255" key="2"/>
<evidence type="ECO:0000305" key="3"/>
<reference key="1">
    <citation type="journal article" date="2003" name="Nature">
        <title>Genome sequence of Bacillus cereus and comparative analysis with Bacillus anthracis.</title>
        <authorList>
            <person name="Ivanova N."/>
            <person name="Sorokin A."/>
            <person name="Anderson I."/>
            <person name="Galleron N."/>
            <person name="Candelon B."/>
            <person name="Kapatral V."/>
            <person name="Bhattacharyya A."/>
            <person name="Reznik G."/>
            <person name="Mikhailova N."/>
            <person name="Lapidus A."/>
            <person name="Chu L."/>
            <person name="Mazur M."/>
            <person name="Goltsman E."/>
            <person name="Larsen N."/>
            <person name="D'Souza M."/>
            <person name="Walunas T."/>
            <person name="Grechkin Y."/>
            <person name="Pusch G."/>
            <person name="Haselkorn R."/>
            <person name="Fonstein M."/>
            <person name="Ehrlich S.D."/>
            <person name="Overbeek R."/>
            <person name="Kyrpides N.C."/>
        </authorList>
    </citation>
    <scope>NUCLEOTIDE SEQUENCE [LARGE SCALE GENOMIC DNA]</scope>
    <source>
        <strain>ATCC 14579 / DSM 31 / CCUG 7414 / JCM 2152 / NBRC 15305 / NCIMB 9373 / NCTC 2599 / NRRL B-3711</strain>
    </source>
</reference>
<accession>Q816V0</accession>
<keyword id="KW-1003">Cell membrane</keyword>
<keyword id="KW-0472">Membrane</keyword>
<keyword id="KW-1185">Reference proteome</keyword>
<keyword id="KW-0762">Sugar transport</keyword>
<keyword id="KW-0812">Transmembrane</keyword>
<keyword id="KW-1133">Transmembrane helix</keyword>
<keyword id="KW-0813">Transport</keyword>
<protein>
    <recommendedName>
        <fullName>Probable glucose uptake protein GlcU</fullName>
    </recommendedName>
</protein>
<name>GLCU_BACCR</name>